<sequence length="209" mass="22879">MGDMYDEQFDKAGGPADLMDDSWVESTAWKDLLKKLHSVKFALQSGRDEITGLLTTLSRQCPYSPYEQFPERKVYFLLDSRANNALGVIQNASAFKRRADEKNAVAGVTNIPANPNTTVTTNQGSTTTTKANTSSTLEEDLYTYYKFDDASTTFHKSLTSLENMQLKSYYRRNFEKNFGVKFGSASTPASGGSGATPPPASGGAVRPNP</sequence>
<evidence type="ECO:0000256" key="1">
    <source>
        <dbReference type="SAM" id="MobiDB-lite"/>
    </source>
</evidence>
<evidence type="ECO:0000305" key="2"/>
<reference key="1">
    <citation type="journal article" date="1986" name="Nucleic Acids Res.">
        <title>Analysis of the genome structure of tobacco rattle virus strain PSG.</title>
        <authorList>
            <person name="Cornelissen B.J.C."/>
            <person name="Linthorst H.J.M."/>
            <person name="Brederode F.T."/>
            <person name="Bol J.F."/>
        </authorList>
    </citation>
    <scope>NUCLEOTIDE SEQUENCE [GENOMIC RNA]</scope>
</reference>
<feature type="chain" id="PRO_0000222506" description="Coat protein">
    <location>
        <begin position="1"/>
        <end position="209"/>
    </location>
</feature>
<feature type="region of interest" description="Disordered" evidence="1">
    <location>
        <begin position="108"/>
        <end position="132"/>
    </location>
</feature>
<feature type="region of interest" description="Disordered" evidence="1">
    <location>
        <begin position="181"/>
        <end position="209"/>
    </location>
</feature>
<feature type="compositionally biased region" description="Low complexity" evidence="1">
    <location>
        <begin position="116"/>
        <end position="132"/>
    </location>
</feature>
<accession>P69470</accession>
<accession>P05071</accession>
<dbReference type="EMBL" id="X03686">
    <property type="protein sequence ID" value="CAA27322.1"/>
    <property type="molecule type" value="Genomic_RNA"/>
</dbReference>
<dbReference type="PIR" id="A04188">
    <property type="entry name" value="VCBVCP"/>
</dbReference>
<dbReference type="SMR" id="P69470"/>
<dbReference type="GO" id="GO:0019028">
    <property type="term" value="C:viral capsid"/>
    <property type="evidence" value="ECO:0007669"/>
    <property type="project" value="UniProtKB-KW"/>
</dbReference>
<dbReference type="GO" id="GO:0005198">
    <property type="term" value="F:structural molecule activity"/>
    <property type="evidence" value="ECO:0007669"/>
    <property type="project" value="InterPro"/>
</dbReference>
<dbReference type="Gene3D" id="1.20.120.70">
    <property type="entry name" value="Tobacco mosaic virus-like, coat protein"/>
    <property type="match status" value="1"/>
</dbReference>
<dbReference type="InterPro" id="IPR001337">
    <property type="entry name" value="TMV-like_coat"/>
</dbReference>
<dbReference type="InterPro" id="IPR036417">
    <property type="entry name" value="TMV-like_coat_sf"/>
</dbReference>
<dbReference type="Pfam" id="PF00721">
    <property type="entry name" value="TMV_coat"/>
    <property type="match status" value="1"/>
</dbReference>
<dbReference type="SUPFAM" id="SSF47195">
    <property type="entry name" value="TMV-like viral coat proteins"/>
    <property type="match status" value="1"/>
</dbReference>
<proteinExistence type="predicted"/>
<protein>
    <recommendedName>
        <fullName>Coat protein</fullName>
    </recommendedName>
    <alternativeName>
        <fullName>Capsid protein</fullName>
    </alternativeName>
</protein>
<comment type="subcellular location">
    <subcellularLocation>
        <location evidence="2">Virion</location>
    </subcellularLocation>
</comment>
<keyword id="KW-0167">Capsid protein</keyword>
<keyword id="KW-0946">Virion</keyword>
<name>COAT_TRVPS</name>
<organism>
    <name type="scientific">Tobacco rattle virus (strain PSG)</name>
    <dbReference type="NCBI Taxonomy" id="12297"/>
    <lineage>
        <taxon>Viruses</taxon>
        <taxon>Riboviria</taxon>
        <taxon>Orthornavirae</taxon>
        <taxon>Kitrinoviricota</taxon>
        <taxon>Alsuviricetes</taxon>
        <taxon>Martellivirales</taxon>
        <taxon>Virgaviridae</taxon>
        <taxon>Tobravirus</taxon>
        <taxon>Tobacco rattle virus</taxon>
    </lineage>
</organism>
<organismHost>
    <name type="scientific">Beta vulgaris</name>
    <name type="common">Sugar beet</name>
    <dbReference type="NCBI Taxonomy" id="161934"/>
</organismHost>
<organismHost>
    <name type="scientific">Capsicum annuum</name>
    <name type="common">Capsicum pepper</name>
    <dbReference type="NCBI Taxonomy" id="4072"/>
</organismHost>
<organismHost>
    <name type="scientific">Hyacinthus</name>
    <dbReference type="NCBI Taxonomy" id="82024"/>
</organismHost>
<organismHost>
    <name type="scientific">Narcissus pseudonarcissus</name>
    <name type="common">Daffodil</name>
    <dbReference type="NCBI Taxonomy" id="39639"/>
</organismHost>
<organismHost>
    <name type="scientific">Nicotiana tabacum</name>
    <name type="common">Common tobacco</name>
    <dbReference type="NCBI Taxonomy" id="4097"/>
</organismHost>
<organismHost>
    <name type="scientific">Solanum tuberosum</name>
    <name type="common">Potato</name>
    <dbReference type="NCBI Taxonomy" id="4113"/>
</organismHost>
<organismHost>
    <name type="scientific">Spinacia oleracea</name>
    <name type="common">Spinach</name>
    <dbReference type="NCBI Taxonomy" id="3562"/>
</organismHost>
<organismHost>
    <name type="scientific">Stellaria media</name>
    <name type="common">Common chickweed</name>
    <name type="synonym">Alsine media</name>
    <dbReference type="NCBI Taxonomy" id="13274"/>
</organismHost>
<organismHost>
    <name type="scientific">Tulipa</name>
    <dbReference type="NCBI Taxonomy" id="13305"/>
</organismHost>
<organismHost>
    <name type="scientific">Viola arvensis</name>
    <name type="common">European field pansy</name>
    <name type="synonym">Field violet</name>
    <dbReference type="NCBI Taxonomy" id="97415"/>
</organismHost>